<reference key="1">
    <citation type="journal article" date="2007" name="PLoS ONE">
        <title>Analysis of the neurotoxin complex genes in Clostridium botulinum A1-A4 and B1 strains: BoNT/A3, /Ba4 and /B1 clusters are located within plasmids.</title>
        <authorList>
            <person name="Smith T.J."/>
            <person name="Hill K.K."/>
            <person name="Foley B.T."/>
            <person name="Detter J.C."/>
            <person name="Munk A.C."/>
            <person name="Bruce D.C."/>
            <person name="Doggett N.A."/>
            <person name="Smith L.A."/>
            <person name="Marks J.D."/>
            <person name="Xie G."/>
            <person name="Brettin T.S."/>
        </authorList>
    </citation>
    <scope>NUCLEOTIDE SEQUENCE [LARGE SCALE GENOMIC DNA]</scope>
    <source>
        <strain>Okra / Type B1</strain>
    </source>
</reference>
<accession>B1IGF4</accession>
<organism>
    <name type="scientific">Clostridium botulinum (strain Okra / Type B1)</name>
    <dbReference type="NCBI Taxonomy" id="498213"/>
    <lineage>
        <taxon>Bacteria</taxon>
        <taxon>Bacillati</taxon>
        <taxon>Bacillota</taxon>
        <taxon>Clostridia</taxon>
        <taxon>Eubacteriales</taxon>
        <taxon>Clostridiaceae</taxon>
        <taxon>Clostridium</taxon>
    </lineage>
</organism>
<proteinExistence type="inferred from homology"/>
<evidence type="ECO:0000255" key="1">
    <source>
        <dbReference type="HAMAP-Rule" id="MF_01325"/>
    </source>
</evidence>
<evidence type="ECO:0000305" key="2"/>
<sequence>MKKAILGKKLGMTQIFNENGKVIPVTVIEAGPCTVIQKKTVEKDGYEAIQVAFGDIREKLRNKPVKGHFAKAGVSVKRHIKEFKLEDSNSLEIGQEIKADVFEAGERVDISGVSKGKGFQGTIRRWNAHRGPMSHGSKFHRAVGSMGASSDPSRTFKNKRMPGHMGNVNTTVLNLEVVKIIPEKNLILIKGGVPGPNKGLVQIRNTVKA</sequence>
<name>RL3_CLOBK</name>
<dbReference type="EMBL" id="CP000939">
    <property type="protein sequence ID" value="ACA46267.1"/>
    <property type="molecule type" value="Genomic_DNA"/>
</dbReference>
<dbReference type="RefSeq" id="WP_003399217.1">
    <property type="nucleotide sequence ID" value="NC_010516.1"/>
</dbReference>
<dbReference type="SMR" id="B1IGF4"/>
<dbReference type="KEGG" id="cbb:CLD_1024"/>
<dbReference type="HOGENOM" id="CLU_044142_4_1_9"/>
<dbReference type="Proteomes" id="UP000008541">
    <property type="component" value="Chromosome"/>
</dbReference>
<dbReference type="GO" id="GO:0022625">
    <property type="term" value="C:cytosolic large ribosomal subunit"/>
    <property type="evidence" value="ECO:0007669"/>
    <property type="project" value="TreeGrafter"/>
</dbReference>
<dbReference type="GO" id="GO:0019843">
    <property type="term" value="F:rRNA binding"/>
    <property type="evidence" value="ECO:0007669"/>
    <property type="project" value="UniProtKB-UniRule"/>
</dbReference>
<dbReference type="GO" id="GO:0003735">
    <property type="term" value="F:structural constituent of ribosome"/>
    <property type="evidence" value="ECO:0007669"/>
    <property type="project" value="InterPro"/>
</dbReference>
<dbReference type="GO" id="GO:0006412">
    <property type="term" value="P:translation"/>
    <property type="evidence" value="ECO:0007669"/>
    <property type="project" value="UniProtKB-UniRule"/>
</dbReference>
<dbReference type="FunFam" id="2.40.30.10:FF:000004">
    <property type="entry name" value="50S ribosomal protein L3"/>
    <property type="match status" value="1"/>
</dbReference>
<dbReference type="FunFam" id="3.30.160.810:FF:000001">
    <property type="entry name" value="50S ribosomal protein L3"/>
    <property type="match status" value="1"/>
</dbReference>
<dbReference type="Gene3D" id="3.30.160.810">
    <property type="match status" value="1"/>
</dbReference>
<dbReference type="Gene3D" id="2.40.30.10">
    <property type="entry name" value="Translation factors"/>
    <property type="match status" value="1"/>
</dbReference>
<dbReference type="HAMAP" id="MF_01325_B">
    <property type="entry name" value="Ribosomal_uL3_B"/>
    <property type="match status" value="1"/>
</dbReference>
<dbReference type="InterPro" id="IPR000597">
    <property type="entry name" value="Ribosomal_uL3"/>
</dbReference>
<dbReference type="InterPro" id="IPR019927">
    <property type="entry name" value="Ribosomal_uL3_bac/org-type"/>
</dbReference>
<dbReference type="InterPro" id="IPR019926">
    <property type="entry name" value="Ribosomal_uL3_CS"/>
</dbReference>
<dbReference type="InterPro" id="IPR009000">
    <property type="entry name" value="Transl_B-barrel_sf"/>
</dbReference>
<dbReference type="NCBIfam" id="TIGR03625">
    <property type="entry name" value="L3_bact"/>
    <property type="match status" value="1"/>
</dbReference>
<dbReference type="PANTHER" id="PTHR11229">
    <property type="entry name" value="50S RIBOSOMAL PROTEIN L3"/>
    <property type="match status" value="1"/>
</dbReference>
<dbReference type="PANTHER" id="PTHR11229:SF16">
    <property type="entry name" value="LARGE RIBOSOMAL SUBUNIT PROTEIN UL3C"/>
    <property type="match status" value="1"/>
</dbReference>
<dbReference type="Pfam" id="PF00297">
    <property type="entry name" value="Ribosomal_L3"/>
    <property type="match status" value="1"/>
</dbReference>
<dbReference type="SUPFAM" id="SSF50447">
    <property type="entry name" value="Translation proteins"/>
    <property type="match status" value="1"/>
</dbReference>
<dbReference type="PROSITE" id="PS00474">
    <property type="entry name" value="RIBOSOMAL_L3"/>
    <property type="match status" value="1"/>
</dbReference>
<gene>
    <name evidence="1" type="primary">rplC</name>
    <name type="ordered locus">CLD_1024</name>
</gene>
<comment type="function">
    <text evidence="1">One of the primary rRNA binding proteins, it binds directly near the 3'-end of the 23S rRNA, where it nucleates assembly of the 50S subunit.</text>
</comment>
<comment type="subunit">
    <text evidence="1">Part of the 50S ribosomal subunit. Forms a cluster with proteins L14 and L19.</text>
</comment>
<comment type="similarity">
    <text evidence="1">Belongs to the universal ribosomal protein uL3 family.</text>
</comment>
<protein>
    <recommendedName>
        <fullName evidence="1">Large ribosomal subunit protein uL3</fullName>
    </recommendedName>
    <alternativeName>
        <fullName evidence="2">50S ribosomal protein L3</fullName>
    </alternativeName>
</protein>
<feature type="chain" id="PRO_1000141846" description="Large ribosomal subunit protein uL3">
    <location>
        <begin position="1"/>
        <end position="209"/>
    </location>
</feature>
<keyword id="KW-0687">Ribonucleoprotein</keyword>
<keyword id="KW-0689">Ribosomal protein</keyword>
<keyword id="KW-0694">RNA-binding</keyword>
<keyword id="KW-0699">rRNA-binding</keyword>